<keyword id="KW-0929">Antimicrobial</keyword>
<keyword id="KW-1015">Disulfide bond</keyword>
<keyword id="KW-0295">Fungicide</keyword>
<keyword id="KW-0611">Plant defense</keyword>
<keyword id="KW-1185">Reference proteome</keyword>
<keyword id="KW-0964">Secreted</keyword>
<keyword id="KW-0732">Signal</keyword>
<sequence length="88" mass="9071">MGSLRVSTVVIAVVACLSILLISPTEVDGRLVCDTPAGTCTSSSTCNDQCNTWGGNYSGGECADSSFPGLSICYCCHYVGSSAEMESM</sequence>
<comment type="subcellular location">
    <subcellularLocation>
        <location evidence="1">Secreted</location>
    </subcellularLocation>
</comment>
<comment type="similarity">
    <text evidence="3">Belongs to the DEFL family.</text>
</comment>
<comment type="sequence caution" evidence="3">
    <conflict type="erroneous gene model prediction">
        <sequence resource="EMBL-CDS" id="CAA16771"/>
    </conflict>
    <text>The predicted gene has been split into 4 genes: At4g22210, At4g22212, At4g22214 and At4g22217.</text>
</comment>
<comment type="sequence caution" evidence="3">
    <conflict type="erroneous gene model prediction">
        <sequence resource="EMBL-CDS" id="CAB79176"/>
    </conflict>
    <text>The predicted gene has been split into 4 genes: At4g22210, At4g22212, At4g22214 and At4g22217.</text>
</comment>
<evidence type="ECO:0000250" key="1"/>
<evidence type="ECO:0000255" key="2"/>
<evidence type="ECO:0000305" key="3"/>
<dbReference type="EMBL" id="AL021712">
    <property type="protein sequence ID" value="CAA16771.1"/>
    <property type="status" value="ALT_SEQ"/>
    <property type="molecule type" value="Genomic_DNA"/>
</dbReference>
<dbReference type="EMBL" id="AL161556">
    <property type="protein sequence ID" value="CAB79176.1"/>
    <property type="status" value="ALT_SEQ"/>
    <property type="molecule type" value="Genomic_DNA"/>
</dbReference>
<dbReference type="EMBL" id="CP002687">
    <property type="protein sequence ID" value="AEE84573.1"/>
    <property type="molecule type" value="Genomic_DNA"/>
</dbReference>
<dbReference type="EMBL" id="AY045581">
    <property type="protein sequence ID" value="AAK73939.1"/>
    <property type="molecule type" value="mRNA"/>
</dbReference>
<dbReference type="EMBL" id="AY094030">
    <property type="protein sequence ID" value="AAM16186.1"/>
    <property type="molecule type" value="mRNA"/>
</dbReference>
<dbReference type="EMBL" id="AY084624">
    <property type="protein sequence ID" value="AAM61187.1"/>
    <property type="molecule type" value="mRNA"/>
</dbReference>
<dbReference type="PIR" id="T04902">
    <property type="entry name" value="T04902"/>
</dbReference>
<dbReference type="RefSeq" id="NP_567653.1">
    <property type="nucleotide sequence ID" value="NM_118344.3"/>
</dbReference>
<dbReference type="SMR" id="Q94AZ8"/>
<dbReference type="BioGRID" id="13602">
    <property type="interactions" value="5"/>
</dbReference>
<dbReference type="IntAct" id="Q94AZ8">
    <property type="interactions" value="5"/>
</dbReference>
<dbReference type="STRING" id="3702.Q94AZ8"/>
<dbReference type="PaxDb" id="3702-AT4G22212.1"/>
<dbReference type="EnsemblPlants" id="AT4G22212.1">
    <property type="protein sequence ID" value="AT4G22212.1"/>
    <property type="gene ID" value="AT4G22212"/>
</dbReference>
<dbReference type="GeneID" id="828313"/>
<dbReference type="Gramene" id="AT4G22212.1">
    <property type="protein sequence ID" value="AT4G22212.1"/>
    <property type="gene ID" value="AT4G22212"/>
</dbReference>
<dbReference type="KEGG" id="ath:AT4G22212"/>
<dbReference type="Araport" id="AT4G22212"/>
<dbReference type="TAIR" id="AT4G22212"/>
<dbReference type="HOGENOM" id="CLU_2416305_0_0_1"/>
<dbReference type="InParanoid" id="Q94AZ8"/>
<dbReference type="OMA" id="CHFISET"/>
<dbReference type="OrthoDB" id="1052312at2759"/>
<dbReference type="PhylomeDB" id="Q94AZ8"/>
<dbReference type="PRO" id="PR:Q94AZ8"/>
<dbReference type="Proteomes" id="UP000006548">
    <property type="component" value="Chromosome 4"/>
</dbReference>
<dbReference type="ExpressionAtlas" id="Q94AZ8">
    <property type="expression patterns" value="baseline and differential"/>
</dbReference>
<dbReference type="GO" id="GO:0005576">
    <property type="term" value="C:extracellular region"/>
    <property type="evidence" value="ECO:0007669"/>
    <property type="project" value="UniProtKB-SubCell"/>
</dbReference>
<dbReference type="GO" id="GO:0050832">
    <property type="term" value="P:defense response to fungus"/>
    <property type="evidence" value="ECO:0007669"/>
    <property type="project" value="UniProtKB-KW"/>
</dbReference>
<dbReference type="GO" id="GO:0031640">
    <property type="term" value="P:killing of cells of another organism"/>
    <property type="evidence" value="ECO:0007669"/>
    <property type="project" value="UniProtKB-KW"/>
</dbReference>
<organism>
    <name type="scientific">Arabidopsis thaliana</name>
    <name type="common">Mouse-ear cress</name>
    <dbReference type="NCBI Taxonomy" id="3702"/>
    <lineage>
        <taxon>Eukaryota</taxon>
        <taxon>Viridiplantae</taxon>
        <taxon>Streptophyta</taxon>
        <taxon>Embryophyta</taxon>
        <taxon>Tracheophyta</taxon>
        <taxon>Spermatophyta</taxon>
        <taxon>Magnoliopsida</taxon>
        <taxon>eudicotyledons</taxon>
        <taxon>Gunneridae</taxon>
        <taxon>Pentapetalae</taxon>
        <taxon>rosids</taxon>
        <taxon>malvids</taxon>
        <taxon>Brassicales</taxon>
        <taxon>Brassicaceae</taxon>
        <taxon>Camelineae</taxon>
        <taxon>Arabidopsis</taxon>
    </lineage>
</organism>
<gene>
    <name type="ordered locus">At4g22212</name>
    <name type="ORF">T10I14.6</name>
</gene>
<accession>Q94AZ8</accession>
<accession>O49626</accession>
<protein>
    <recommendedName>
        <fullName>Defensin-like protein 98</fullName>
    </recommendedName>
</protein>
<name>DEF98_ARATH</name>
<proteinExistence type="inferred from homology"/>
<feature type="signal peptide" evidence="2">
    <location>
        <begin position="1"/>
        <end position="29"/>
    </location>
</feature>
<feature type="chain" id="PRO_0000379661" description="Defensin-like protein 98">
    <location>
        <begin position="30"/>
        <end position="88"/>
    </location>
</feature>
<feature type="disulfide bond" evidence="1">
    <location>
        <begin position="33"/>
        <end position="76"/>
    </location>
</feature>
<feature type="disulfide bond" evidence="1">
    <location>
        <begin position="40"/>
        <end position="62"/>
    </location>
</feature>
<feature type="disulfide bond" evidence="1">
    <location>
        <begin position="46"/>
        <end position="73"/>
    </location>
</feature>
<feature type="disulfide bond" evidence="1">
    <location>
        <begin position="50"/>
        <end position="75"/>
    </location>
</feature>
<reference key="1">
    <citation type="journal article" date="1999" name="Nature">
        <title>Sequence and analysis of chromosome 4 of the plant Arabidopsis thaliana.</title>
        <authorList>
            <person name="Mayer K.F.X."/>
            <person name="Schueller C."/>
            <person name="Wambutt R."/>
            <person name="Murphy G."/>
            <person name="Volckaert G."/>
            <person name="Pohl T."/>
            <person name="Duesterhoeft A."/>
            <person name="Stiekema W."/>
            <person name="Entian K.-D."/>
            <person name="Terryn N."/>
            <person name="Harris B."/>
            <person name="Ansorge W."/>
            <person name="Brandt P."/>
            <person name="Grivell L.A."/>
            <person name="Rieger M."/>
            <person name="Weichselgartner M."/>
            <person name="de Simone V."/>
            <person name="Obermaier B."/>
            <person name="Mache R."/>
            <person name="Mueller M."/>
            <person name="Kreis M."/>
            <person name="Delseny M."/>
            <person name="Puigdomenech P."/>
            <person name="Watson M."/>
            <person name="Schmidtheini T."/>
            <person name="Reichert B."/>
            <person name="Portetelle D."/>
            <person name="Perez-Alonso M."/>
            <person name="Boutry M."/>
            <person name="Bancroft I."/>
            <person name="Vos P."/>
            <person name="Hoheisel J."/>
            <person name="Zimmermann W."/>
            <person name="Wedler H."/>
            <person name="Ridley P."/>
            <person name="Langham S.-A."/>
            <person name="McCullagh B."/>
            <person name="Bilham L."/>
            <person name="Robben J."/>
            <person name="van der Schueren J."/>
            <person name="Grymonprez B."/>
            <person name="Chuang Y.-J."/>
            <person name="Vandenbussche F."/>
            <person name="Braeken M."/>
            <person name="Weltjens I."/>
            <person name="Voet M."/>
            <person name="Bastiaens I."/>
            <person name="Aert R."/>
            <person name="Defoor E."/>
            <person name="Weitzenegger T."/>
            <person name="Bothe G."/>
            <person name="Ramsperger U."/>
            <person name="Hilbert H."/>
            <person name="Braun M."/>
            <person name="Holzer E."/>
            <person name="Brandt A."/>
            <person name="Peters S."/>
            <person name="van Staveren M."/>
            <person name="Dirkse W."/>
            <person name="Mooijman P."/>
            <person name="Klein Lankhorst R."/>
            <person name="Rose M."/>
            <person name="Hauf J."/>
            <person name="Koetter P."/>
            <person name="Berneiser S."/>
            <person name="Hempel S."/>
            <person name="Feldpausch M."/>
            <person name="Lamberth S."/>
            <person name="Van den Daele H."/>
            <person name="De Keyser A."/>
            <person name="Buysshaert C."/>
            <person name="Gielen J."/>
            <person name="Villarroel R."/>
            <person name="De Clercq R."/>
            <person name="van Montagu M."/>
            <person name="Rogers J."/>
            <person name="Cronin A."/>
            <person name="Quail M.A."/>
            <person name="Bray-Allen S."/>
            <person name="Clark L."/>
            <person name="Doggett J."/>
            <person name="Hall S."/>
            <person name="Kay M."/>
            <person name="Lennard N."/>
            <person name="McLay K."/>
            <person name="Mayes R."/>
            <person name="Pettett A."/>
            <person name="Rajandream M.A."/>
            <person name="Lyne M."/>
            <person name="Benes V."/>
            <person name="Rechmann S."/>
            <person name="Borkova D."/>
            <person name="Bloecker H."/>
            <person name="Scharfe M."/>
            <person name="Grimm M."/>
            <person name="Loehnert T.-H."/>
            <person name="Dose S."/>
            <person name="de Haan M."/>
            <person name="Maarse A.C."/>
            <person name="Schaefer M."/>
            <person name="Mueller-Auer S."/>
            <person name="Gabel C."/>
            <person name="Fuchs M."/>
            <person name="Fartmann B."/>
            <person name="Granderath K."/>
            <person name="Dauner D."/>
            <person name="Herzl A."/>
            <person name="Neumann S."/>
            <person name="Argiriou A."/>
            <person name="Vitale D."/>
            <person name="Liguori R."/>
            <person name="Piravandi E."/>
            <person name="Massenet O."/>
            <person name="Quigley F."/>
            <person name="Clabauld G."/>
            <person name="Muendlein A."/>
            <person name="Felber R."/>
            <person name="Schnabl S."/>
            <person name="Hiller R."/>
            <person name="Schmidt W."/>
            <person name="Lecharny A."/>
            <person name="Aubourg S."/>
            <person name="Chefdor F."/>
            <person name="Cooke R."/>
            <person name="Berger C."/>
            <person name="Monfort A."/>
            <person name="Casacuberta E."/>
            <person name="Gibbons T."/>
            <person name="Weber N."/>
            <person name="Vandenbol M."/>
            <person name="Bargues M."/>
            <person name="Terol J."/>
            <person name="Torres A."/>
            <person name="Perez-Perez A."/>
            <person name="Purnelle B."/>
            <person name="Bent E."/>
            <person name="Johnson S."/>
            <person name="Tacon D."/>
            <person name="Jesse T."/>
            <person name="Heijnen L."/>
            <person name="Schwarz S."/>
            <person name="Scholler P."/>
            <person name="Heber S."/>
            <person name="Francs P."/>
            <person name="Bielke C."/>
            <person name="Frishman D."/>
            <person name="Haase D."/>
            <person name="Lemcke K."/>
            <person name="Mewes H.-W."/>
            <person name="Stocker S."/>
            <person name="Zaccaria P."/>
            <person name="Bevan M."/>
            <person name="Wilson R.K."/>
            <person name="de la Bastide M."/>
            <person name="Habermann K."/>
            <person name="Parnell L."/>
            <person name="Dedhia N."/>
            <person name="Gnoj L."/>
            <person name="Schutz K."/>
            <person name="Huang E."/>
            <person name="Spiegel L."/>
            <person name="Sekhon M."/>
            <person name="Murray J."/>
            <person name="Sheet P."/>
            <person name="Cordes M."/>
            <person name="Abu-Threideh J."/>
            <person name="Stoneking T."/>
            <person name="Kalicki J."/>
            <person name="Graves T."/>
            <person name="Harmon G."/>
            <person name="Edwards J."/>
            <person name="Latreille P."/>
            <person name="Courtney L."/>
            <person name="Cloud J."/>
            <person name="Abbott A."/>
            <person name="Scott K."/>
            <person name="Johnson D."/>
            <person name="Minx P."/>
            <person name="Bentley D."/>
            <person name="Fulton B."/>
            <person name="Miller N."/>
            <person name="Greco T."/>
            <person name="Kemp K."/>
            <person name="Kramer J."/>
            <person name="Fulton L."/>
            <person name="Mardis E."/>
            <person name="Dante M."/>
            <person name="Pepin K."/>
            <person name="Hillier L.W."/>
            <person name="Nelson J."/>
            <person name="Spieth J."/>
            <person name="Ryan E."/>
            <person name="Andrews S."/>
            <person name="Geisel C."/>
            <person name="Layman D."/>
            <person name="Du H."/>
            <person name="Ali J."/>
            <person name="Berghoff A."/>
            <person name="Jones K."/>
            <person name="Drone K."/>
            <person name="Cotton M."/>
            <person name="Joshu C."/>
            <person name="Antonoiu B."/>
            <person name="Zidanic M."/>
            <person name="Strong C."/>
            <person name="Sun H."/>
            <person name="Lamar B."/>
            <person name="Yordan C."/>
            <person name="Ma P."/>
            <person name="Zhong J."/>
            <person name="Preston R."/>
            <person name="Vil D."/>
            <person name="Shekher M."/>
            <person name="Matero A."/>
            <person name="Shah R."/>
            <person name="Swaby I.K."/>
            <person name="O'Shaughnessy A."/>
            <person name="Rodriguez M."/>
            <person name="Hoffman J."/>
            <person name="Till S."/>
            <person name="Granat S."/>
            <person name="Shohdy N."/>
            <person name="Hasegawa A."/>
            <person name="Hameed A."/>
            <person name="Lodhi M."/>
            <person name="Johnson A."/>
            <person name="Chen E."/>
            <person name="Marra M.A."/>
            <person name="Martienssen R."/>
            <person name="McCombie W.R."/>
        </authorList>
    </citation>
    <scope>NUCLEOTIDE SEQUENCE [LARGE SCALE GENOMIC DNA]</scope>
    <source>
        <strain>cv. Columbia</strain>
    </source>
</reference>
<reference key="2">
    <citation type="journal article" date="2017" name="Plant J.">
        <title>Araport11: a complete reannotation of the Arabidopsis thaliana reference genome.</title>
        <authorList>
            <person name="Cheng C.Y."/>
            <person name="Krishnakumar V."/>
            <person name="Chan A.P."/>
            <person name="Thibaud-Nissen F."/>
            <person name="Schobel S."/>
            <person name="Town C.D."/>
        </authorList>
    </citation>
    <scope>GENOME REANNOTATION</scope>
    <source>
        <strain>cv. Columbia</strain>
    </source>
</reference>
<reference key="3">
    <citation type="journal article" date="2003" name="Science">
        <title>Empirical analysis of transcriptional activity in the Arabidopsis genome.</title>
        <authorList>
            <person name="Yamada K."/>
            <person name="Lim J."/>
            <person name="Dale J.M."/>
            <person name="Chen H."/>
            <person name="Shinn P."/>
            <person name="Palm C.J."/>
            <person name="Southwick A.M."/>
            <person name="Wu H.C."/>
            <person name="Kim C.J."/>
            <person name="Nguyen M."/>
            <person name="Pham P.K."/>
            <person name="Cheuk R.F."/>
            <person name="Karlin-Newmann G."/>
            <person name="Liu S.X."/>
            <person name="Lam B."/>
            <person name="Sakano H."/>
            <person name="Wu T."/>
            <person name="Yu G."/>
            <person name="Miranda M."/>
            <person name="Quach H.L."/>
            <person name="Tripp M."/>
            <person name="Chang C.H."/>
            <person name="Lee J.M."/>
            <person name="Toriumi M.J."/>
            <person name="Chan M.M."/>
            <person name="Tang C.C."/>
            <person name="Onodera C.S."/>
            <person name="Deng J.M."/>
            <person name="Akiyama K."/>
            <person name="Ansari Y."/>
            <person name="Arakawa T."/>
            <person name="Banh J."/>
            <person name="Banno F."/>
            <person name="Bowser L."/>
            <person name="Brooks S.Y."/>
            <person name="Carninci P."/>
            <person name="Chao Q."/>
            <person name="Choy N."/>
            <person name="Enju A."/>
            <person name="Goldsmith A.D."/>
            <person name="Gurjal M."/>
            <person name="Hansen N.F."/>
            <person name="Hayashizaki Y."/>
            <person name="Johnson-Hopson C."/>
            <person name="Hsuan V.W."/>
            <person name="Iida K."/>
            <person name="Karnes M."/>
            <person name="Khan S."/>
            <person name="Koesema E."/>
            <person name="Ishida J."/>
            <person name="Jiang P.X."/>
            <person name="Jones T."/>
            <person name="Kawai J."/>
            <person name="Kamiya A."/>
            <person name="Meyers C."/>
            <person name="Nakajima M."/>
            <person name="Narusaka M."/>
            <person name="Seki M."/>
            <person name="Sakurai T."/>
            <person name="Satou M."/>
            <person name="Tamse R."/>
            <person name="Vaysberg M."/>
            <person name="Wallender E.K."/>
            <person name="Wong C."/>
            <person name="Yamamura Y."/>
            <person name="Yuan S."/>
            <person name="Shinozaki K."/>
            <person name="Davis R.W."/>
            <person name="Theologis A."/>
            <person name="Ecker J.R."/>
        </authorList>
    </citation>
    <scope>NUCLEOTIDE SEQUENCE [LARGE SCALE MRNA]</scope>
    <source>
        <strain>cv. Columbia</strain>
    </source>
</reference>
<reference key="4">
    <citation type="submission" date="2002-03" db="EMBL/GenBank/DDBJ databases">
        <title>Full-length cDNA from Arabidopsis thaliana.</title>
        <authorList>
            <person name="Brover V.V."/>
            <person name="Troukhan M.E."/>
            <person name="Alexandrov N.A."/>
            <person name="Lu Y.-P."/>
            <person name="Flavell R.B."/>
            <person name="Feldmann K.A."/>
        </authorList>
    </citation>
    <scope>NUCLEOTIDE SEQUENCE [LARGE SCALE MRNA]</scope>
</reference>
<reference key="5">
    <citation type="journal article" date="2005" name="Plant Physiol.">
        <title>Genome organization of more than 300 defensin-like genes in Arabidopsis.</title>
        <authorList>
            <person name="Silverstein K.A.T."/>
            <person name="Graham M.A."/>
            <person name="Paape T.D."/>
            <person name="VandenBosch K.A."/>
        </authorList>
    </citation>
    <scope>GENE FAMILY</scope>
</reference>